<reference key="1">
    <citation type="journal article" date="2004" name="Microbiology">
        <title>Regulation of catabolic enzymes during long-term exposure of Delftia acidovorans MC1 to chlorophenoxy herbicides.</title>
        <authorList>
            <person name="Benndorf D."/>
            <person name="Davidson I."/>
            <person name="Babel W."/>
        </authorList>
    </citation>
    <scope>PROTEIN SEQUENCE</scope>
    <source>
        <strain>MC1</strain>
    </source>
</reference>
<proteinExistence type="evidence at protein level"/>
<gene>
    <name type="primary">tuf</name>
</gene>
<feature type="chain" id="PRO_0000091315" description="Elongation factor Tu">
    <location>
        <begin position="1" status="less than"/>
        <end position="23" status="greater than"/>
    </location>
</feature>
<feature type="non-consecutive residues" evidence="2">
    <location>
        <begin position="15"/>
        <end position="16"/>
    </location>
</feature>
<feature type="non-terminal residue">
    <location>
        <position position="1"/>
    </location>
</feature>
<feature type="non-terminal residue">
    <location>
        <position position="23"/>
    </location>
</feature>
<accession>P83710</accession>
<evidence type="ECO:0000250" key="1"/>
<evidence type="ECO:0000305" key="2"/>
<dbReference type="GO" id="GO:0005737">
    <property type="term" value="C:cytoplasm"/>
    <property type="evidence" value="ECO:0007669"/>
    <property type="project" value="UniProtKB-SubCell"/>
</dbReference>
<dbReference type="GO" id="GO:0005525">
    <property type="term" value="F:GTP binding"/>
    <property type="evidence" value="ECO:0007669"/>
    <property type="project" value="UniProtKB-KW"/>
</dbReference>
<dbReference type="GO" id="GO:0003746">
    <property type="term" value="F:translation elongation factor activity"/>
    <property type="evidence" value="ECO:0007669"/>
    <property type="project" value="UniProtKB-KW"/>
</dbReference>
<protein>
    <recommendedName>
        <fullName>Elongation factor Tu</fullName>
        <shortName>EF-Tu</shortName>
    </recommendedName>
</protein>
<organism>
    <name type="scientific">Delftia acidovorans</name>
    <name type="common">Pseudomonas acidovorans</name>
    <name type="synonym">Comamonas acidovorans</name>
    <dbReference type="NCBI Taxonomy" id="80866"/>
    <lineage>
        <taxon>Bacteria</taxon>
        <taxon>Pseudomonadati</taxon>
        <taxon>Pseudomonadota</taxon>
        <taxon>Betaproteobacteria</taxon>
        <taxon>Burkholderiales</taxon>
        <taxon>Comamonadaceae</taxon>
        <taxon>Delftia</taxon>
    </lineage>
</organism>
<sequence length="23" mass="2304">NMITGAAQMXGAILVAYDSIXAA</sequence>
<comment type="function">
    <text evidence="1">This protein promotes the GTP-dependent binding of aminoacyl-tRNA to the A-site of ribosomes during protein biosynthesis.</text>
</comment>
<comment type="subunit">
    <text evidence="1">Monomer.</text>
</comment>
<comment type="subcellular location">
    <subcellularLocation>
        <location evidence="1">Cytoplasm</location>
    </subcellularLocation>
</comment>
<comment type="PTM">
    <text>The N-terminus is blocked.</text>
</comment>
<comment type="PTM">
    <text>The C-terminus may be subjected to proteolysis.</text>
</comment>
<comment type="miscellaneous">
    <text>Different sizes are detectable in 2D-gels depending on concentration of the herbicide dichlorprop [(R)-2-(2,4-dichlorophenoxy)propionate].</text>
</comment>
<comment type="similarity">
    <text evidence="2">Belongs to the GTP-binding elongation factor family. EF-Tu/EF-1A subfamily.</text>
</comment>
<name>EFTU_DELAC</name>
<keyword id="KW-0963">Cytoplasm</keyword>
<keyword id="KW-0903">Direct protein sequencing</keyword>
<keyword id="KW-0251">Elongation factor</keyword>
<keyword id="KW-0342">GTP-binding</keyword>
<keyword id="KW-0547">Nucleotide-binding</keyword>
<keyword id="KW-0648">Protein biosynthesis</keyword>